<gene>
    <name type="primary">Smarcd1</name>
    <name type="synonym">Baf60a</name>
    <name type="synonym">D15Kz1</name>
</gene>
<comment type="function">
    <text evidence="3 7">Involved in transcriptional activation and repression of select genes by chromatin remodeling (alteration of DNA-nucleosome topology). Component of SWI/SNF chromatin remodeling complexes that carry out key enzymatic activities, changing chromatin structure by altering DNA-histone contacts within a nucleosome in an ATP-dependent manner (By similarity). Belongs to the neural progenitors-specific chromatin remodeling complex (npBAF complex) and the neuron-specific chromatin remodeling complex (nBAF complex). During neural development a switch from a stem/progenitor to a postmitotic chromatin remodeling mechanism occurs as neurons exit the cell cycle and become committed to their adult state. The transition from proliferating neural stem/progenitor cells to postmitotic neurons requires a switch in subunit composition of the npBAF and nBAF complexes. As neural progenitors exit mitosis and differentiate into neurons, npBAF complexes which contain ACTL6A/BAF53A and PHF10/BAF45A, are exchanged for homologous alternative ACTL6B/BAF53B and DPF1/BAF45B or DPF3/BAF45C subunits in neuron-specific complexes (nBAF). The npBAF complex is essential for the self-renewal/proliferative capacity of the multipotent neural stem cells. The nBAF complex along with CREST plays a role regulating the activity of genes essential for dendrite growth (PubMed:17640523). Has a strong influence on vitamin D-mediated transcriptional activity from an enhancer vitamin D receptor element (VDRE). May be a link between mammalian SWI-SNF-like chromatin remodeling complexes and the vitamin D receptor (VDR) heterodimer. Mediates critical interactions between nuclear receptors and the BRG1/SMARCA4 chromatin-remodeling complex for transactivation (By similarity).</text>
</comment>
<comment type="subunit">
    <text evidence="3 7 8 10 11 12 13">Component of the multiprotein chromatin-remodeling complexes SWI/SNF: SWI/SNF-A (BAF), SWI/SNF-B (PBAF) and related complexes. The canonical complex contains a catalytic subunit (either SMARCA4/BRG1/BAF190A or SMARCA2/BRM/BAF190B), and at least SMARCE1, ACTL6A/BAF53, SMARCC1/BAF155, SMARCC2/BAF170, and SMARCB1/SNF5/BAF47. Other subunits specific to each of the complexes may also be present permitting several possible combinations developmentally and tissue specific (PubMed:8804307, PubMed:8895581). Component of the BAF complex, which includes at least actin (ACTB), ARID1A/BAF250A, ARID1B/BAF250B, SMARCA2/BRM, SMARCA4/BRG1/BAF190A, ACTL6A/BAF53, ACTL6B/BAF53B, SMARCE1/BAF57, SMARCC1/BAF155, SMARCC2/BAF170, SMARCB1/SNF5/INI1, and one or more SMARCD1/BAF60A, SMARCD2/BAF60B, or SMARCD3/BAF60C (By similarity). In muscle cells, the BAF complex also contains DPF3. Component of neural progenitors-specific chromatin remodeling complex (npBAF complex) composed of at least, ARID1A/BAF250A or ARID1B/BAF250B, SMARCD1/BAF60A, SMARCD3/BAF60C, SMARCA2/BRM/BAF190B, SMARCA4/BRG1/BAF190A, SMARCB1/BAF47, SMARCC1/BAF155, SMARCE1/BAF57, SMARCC2/BAF170, PHF10/BAF45A, ACTL6A/BAF53A and actin. Component of neuron-specific chromatin remodeling complex (nBAF complex) composed of at least, ARID1A/BAF250A or ARID1B/BAF250B, SMARCD1/BAF60A, SMARCD3/BAF60C, SMARCA2/BRM/BAF190B, SMARCA4/BRG1/BAF190A, SMARCB1/BAF47, SMARCC1/BAF155, SMARCE1/BAF57, SMARCC2/BAF170, DPF1/BAF45B, DPF3/BAF45C, ACTL6B/BAF53B and actin (PubMed:17640523). Component of the SWI/SNF-B (PBAF) chromatin remodeling complex, at least composed of SMARCA4/BRG1, SMARCB1/BAF47/SNF5, ACTL6A/BAF53A or ACTL6B/BAF53B, SMARCE1/BAF57, SMARCD1/BAF60A, SMARCD2/BAF60B, perhaps SMARCD3/BAF60C, SMARCC1/BAF155, SMARCC2/BAF170, PBRM1/BAF180, ARID2/BAF200 and actin (ACTB) (By similarity). Component of SWI/SNF (GBAF) subcomplex, which includes at least BICRA or BICRAL (mutually exclusive), BRD9, SS18, SMARCA2/BRM, SMARCA4/BRG1/BAF190A, ACTL6A/BAF53, SMARCC1/BAF155, and SMARCD1/BAF60A (PubMed:29374058). Specifically interacts with the VDR heterodimer complex. Interacts with ESR1, NR3C1, NR1H4, PGR, SMARCA4, SMARCC1 and SMARCC2 (By similarity). Interacts with DPF2 (By similarity). Interacts with DPF3a (isoform 2 of DPF3/BAF45C) and with HDGFL2 in a DPF3a-dependent manner (By similarity). Interacts with FOS, FOSB isoform 1 and 2, FOSL1 and FOSL2 (PubMed:29272704). Interacts with AKIRIN2 (PubMed:25107474).</text>
</comment>
<comment type="interaction">
    <interactant intactId="EBI-371529">
        <id>Q61466</id>
    </interactant>
    <interactant intactId="EBI-10107866">
        <id>B1AXD8</id>
        <label>Akirin2</label>
    </interactant>
    <organismsDiffer>false</organismsDiffer>
    <experiments>2</experiments>
</comment>
<comment type="interaction">
    <interactant intactId="EBI-371529">
        <id>Q61466</id>
    </interactant>
    <interactant intactId="EBI-648047">
        <id>P97496</id>
        <label>Smarcc1</label>
    </interactant>
    <organismsDiffer>false</organismsDiffer>
    <experiments>3</experiments>
</comment>
<comment type="interaction">
    <interactant intactId="EBI-371529">
        <id>Q61466</id>
    </interactant>
    <interactant intactId="EBI-13635846">
        <id>P70323</id>
        <label>Tbx1</label>
    </interactant>
    <organismsDiffer>false</organismsDiffer>
    <experiments>3</experiments>
</comment>
<comment type="interaction">
    <interactant intactId="EBI-371529">
        <id>Q61466</id>
    </interactant>
    <interactant intactId="EBI-474016">
        <id>P02340</id>
        <label>Tp53</label>
    </interactant>
    <organismsDiffer>false</organismsDiffer>
    <experiments>4</experiments>
</comment>
<comment type="subcellular location">
    <subcellularLocation>
        <location evidence="14">Nucleus</location>
    </subcellularLocation>
</comment>
<comment type="tissue specificity">
    <text evidence="9 12">Ubiquitous.</text>
</comment>
<comment type="developmental stage">
    <text evidence="7">Expressed ubiquitously throughout the developing spinal cord, brain and other embryonic tissues at 10.5-16.5 dpc.</text>
</comment>
<comment type="similarity">
    <text evidence="14">Belongs to the SMARCD family.</text>
</comment>
<comment type="sequence caution" evidence="14">
    <conflict type="erroneous initiation">
        <sequence resource="EMBL-CDS" id="AAA53377"/>
    </conflict>
    <text>Truncated N-terminus.</text>
</comment>
<comment type="sequence caution" evidence="14">
    <conflict type="frameshift">
        <sequence resource="EMBL-CDS" id="AAA53377"/>
    </conflict>
</comment>
<comment type="sequence caution" evidence="14">
    <conflict type="erroneous initiation">
        <sequence resource="EMBL-CDS" id="AAC52794"/>
    </conflict>
    <text>Truncated N-terminus.</text>
</comment>
<comment type="sequence caution" evidence="14">
    <conflict type="frameshift">
        <sequence resource="EMBL-CDS" id="AAC52794"/>
    </conflict>
</comment>
<comment type="sequence caution" evidence="14">
    <conflict type="erroneous initiation">
        <sequence resource="EMBL-CDS" id="AAH26783"/>
    </conflict>
    <text>Truncated N-terminus.</text>
</comment>
<protein>
    <recommendedName>
        <fullName>SWI/SNF-related matrix-associated actin-dependent regulator of chromatin subfamily D member 1</fullName>
    </recommendedName>
    <alternativeName>
        <fullName>60 kDa BRG-1/Brm-associated factor subunit A</fullName>
    </alternativeName>
    <alternativeName>
        <fullName>BRG1-associated factor 60A</fullName>
        <shortName>BAF60A</shortName>
    </alternativeName>
    <alternativeName>
        <fullName>Protein D15KZ1</fullName>
    </alternativeName>
    <alternativeName>
        <fullName>SWI/SNF complex 60 kDa subunit</fullName>
    </alternativeName>
</protein>
<dbReference type="EMBL" id="BC026783">
    <property type="protein sequence ID" value="AAH26783.3"/>
    <property type="status" value="ALT_INIT"/>
    <property type="molecule type" value="mRNA"/>
</dbReference>
<dbReference type="EMBL" id="BC059921">
    <property type="status" value="NOT_ANNOTATED_CDS"/>
    <property type="molecule type" value="mRNA"/>
</dbReference>
<dbReference type="EMBL" id="M25773">
    <property type="protein sequence ID" value="AAA53377.1"/>
    <property type="status" value="ALT_SEQ"/>
    <property type="molecule type" value="mRNA"/>
</dbReference>
<dbReference type="EMBL" id="U66620">
    <property type="protein sequence ID" value="AAC52794.1"/>
    <property type="status" value="ALT_SEQ"/>
    <property type="molecule type" value="mRNA"/>
</dbReference>
<dbReference type="EMBL" id="AK075611">
    <property type="protein sequence ID" value="BAC35856.1"/>
    <property type="molecule type" value="mRNA"/>
</dbReference>
<dbReference type="CCDS" id="CCDS37204.1"/>
<dbReference type="PIR" id="A30222">
    <property type="entry name" value="A30222"/>
</dbReference>
<dbReference type="RefSeq" id="NP_114030.2">
    <property type="nucleotide sequence ID" value="NM_031842.3"/>
</dbReference>
<dbReference type="PDB" id="1UHR">
    <property type="method" value="NMR"/>
    <property type="chains" value="A=291-370"/>
</dbReference>
<dbReference type="PDBsum" id="1UHR"/>
<dbReference type="SMR" id="Q61466"/>
<dbReference type="BioGRID" id="219977">
    <property type="interactions" value="26"/>
</dbReference>
<dbReference type="ComplexPortal" id="CPX-1232">
    <property type="entry name" value="SWI/SNF ATP-dependent chromatin remodeling complex, ACTL6A-ARID1A-SMARCA2 variant"/>
</dbReference>
<dbReference type="ComplexPortal" id="CPX-1233">
    <property type="entry name" value="SWI/SNF ATP-dependent chromatin remodeling complex, ACTL6A-ARID1A-SMARCA4 variant"/>
</dbReference>
<dbReference type="ComplexPortal" id="CPX-1234">
    <property type="entry name" value="SWI/SNF ATP-dependent chromatin remodeling complex, ACTL6A-ARID1B-SMARCA2 variant"/>
</dbReference>
<dbReference type="ComplexPortal" id="CPX-1235">
    <property type="entry name" value="SWI/SNF ATP-dependent chromatin remodeling complex, ACTL6A-ARID1B-SMARCA4 variant"/>
</dbReference>
<dbReference type="ComplexPortal" id="CPX-1236">
    <property type="entry name" value="SWI/SNF ATP-dependent chromatin remodeling complex, ACTL6B-ARID1A-SMARCA2 variant"/>
</dbReference>
<dbReference type="ComplexPortal" id="CPX-1237">
    <property type="entry name" value="SWI/SNF ATP-dependent chromatin remodeling complex, ACTL6B-ARID1A-SMARCA4 variant"/>
</dbReference>
<dbReference type="ComplexPortal" id="CPX-1238">
    <property type="entry name" value="SWI/SNF ATP-dependent chromatin remodeling complex, ACTL6B-ARID1B-SMARCA2 variant"/>
</dbReference>
<dbReference type="ComplexPortal" id="CPX-1239">
    <property type="entry name" value="SWI/SNF ATP-dependent chromatin remodeling complex, ACTL6B-ARID1B-SMARCA4 variant"/>
</dbReference>
<dbReference type="ComplexPortal" id="CPX-1240">
    <property type="entry name" value="Muscle cell-specific SWI/SNF ATP-dependent chromatin remodeling complex, ACTL6A-ARID1A-SMARCA2 variant"/>
</dbReference>
<dbReference type="ComplexPortal" id="CPX-1241">
    <property type="entry name" value="Muscle cell-specific SWI/SNF ATP-dependent chromatin remodeling complex, ACTL6A-ARID1A-SMARCA4 variant"/>
</dbReference>
<dbReference type="ComplexPortal" id="CPX-1242">
    <property type="entry name" value="Muscle cell-specific SWI/SNF ATP-dependent chromatin remodeling complex, ACTL6A-ARID1B-SMARCA2 variant"/>
</dbReference>
<dbReference type="ComplexPortal" id="CPX-1243">
    <property type="entry name" value="Muscle cell-specific SWI/SNF ATP-dependent chromatin remodeling complex, ACTL6A-ARID1B-SMARCA4 variant"/>
</dbReference>
<dbReference type="ComplexPortal" id="CPX-1244">
    <property type="entry name" value="Muscle cell-specific SWI/SNF ATP-dependent chromatin remodeling complex, ACTL6B-ARID1A-SMARCA2 variant"/>
</dbReference>
<dbReference type="ComplexPortal" id="CPX-1245">
    <property type="entry name" value="Muscle cell-specific SWI/SNF ATP-dependent chromatin remodeling complex, ACTL6B-ARID1A-SMARCA4 variant"/>
</dbReference>
<dbReference type="ComplexPortal" id="CPX-1246">
    <property type="entry name" value="Muscle cell-specific SWI/SNF ATP-dependent chromatin remodeling complex, ACTL6B-ARID1B-SMARCA2 variant"/>
</dbReference>
<dbReference type="ComplexPortal" id="CPX-1247">
    <property type="entry name" value="Muscle cell-specific SWI/SNF ATP-dependent chromatin remodeling complex, ACTL6B-ARID1B-SMARCA4 variant"/>
</dbReference>
<dbReference type="ComplexPortal" id="CPX-1248">
    <property type="entry name" value="Polybromo-associated SWI/SNF ATP-dependent chromatin remodeling complex, ACTL6A variant"/>
</dbReference>
<dbReference type="ComplexPortal" id="CPX-1250">
    <property type="entry name" value="Polybromo-associated SWI/SNF ATP-dependent chromatin remodeling complex, ACTL6B variant"/>
</dbReference>
<dbReference type="ComplexPortal" id="CPX-1251">
    <property type="entry name" value="Embryonic stem cell-specific SWI/SNF ATP-dependent chromatin remodeling complex"/>
</dbReference>
<dbReference type="ComplexPortal" id="CPX-1252">
    <property type="entry name" value="Neural progenitor-specific SWI/SNF ATP-dependent chromatin remodeling complex, ARID1A-SMARCA2 variant"/>
</dbReference>
<dbReference type="ComplexPortal" id="CPX-1253">
    <property type="entry name" value="Neural progenitor-specific SWI/SNF ATP-dependent chromatin remodeling complex, ARID1A-SMARCA4 variant"/>
</dbReference>
<dbReference type="ComplexPortal" id="CPX-1254">
    <property type="entry name" value="Neural progenitor-specific SWI/SNF ATP-dependent chromatin remodeling complex, ARID1B-SMARCA2 variant"/>
</dbReference>
<dbReference type="ComplexPortal" id="CPX-1255">
    <property type="entry name" value="Neural progenitor-specific SWI/SNF ATP-dependent chromatin remodeling complex, ARID1B-SMARCA4 variant"/>
</dbReference>
<dbReference type="ComplexPortal" id="CPX-1256">
    <property type="entry name" value="Neuron-specific SWI/SNF ATP-dependent chromatin remodeling complex, ARID1A-SMARCA2 variant"/>
</dbReference>
<dbReference type="ComplexPortal" id="CPX-1257">
    <property type="entry name" value="Neuron-specific SWI/SNF ATP-dependent chromatin remodeling complex, ARID1A-SMARCA4 variant"/>
</dbReference>
<dbReference type="ComplexPortal" id="CPX-1258">
    <property type="entry name" value="Neuron-specific SWI/SNF ATP-dependent chromatin remodeling complex, ARID1B-SMARCA2 variant"/>
</dbReference>
<dbReference type="ComplexPortal" id="CPX-1259">
    <property type="entry name" value="Neuron-specific SWI/SNF ATP-dependent chromatin remodeling complex, ARID1B-SMARCA4 variant"/>
</dbReference>
<dbReference type="ComplexPortal" id="CPX-4202">
    <property type="entry name" value="GBAF (SWI/SNF) ATP-dependent chromatin remodeling complex, ACTL6A-BICRA-SMARCA2 variant"/>
</dbReference>
<dbReference type="ComplexPortal" id="CPX-4204">
    <property type="entry name" value="GBAF (SWI/SNF) ATP-dependent chromatin remodeling complex, ACTL6A-BICRAL-SMARCA2 variant"/>
</dbReference>
<dbReference type="ComplexPortal" id="CPX-4221">
    <property type="entry name" value="GBAF (SWI/SNF) ATP-dependent chromatin remodeling complex, ACTL6A-BICRA-SMARCA4 variant"/>
</dbReference>
<dbReference type="ComplexPortal" id="CPX-4222">
    <property type="entry name" value="GBAF (SWI/SNF) ATP-dependent chromatin remodeling complex, ACTL6A-BICRAL-SMARCA4 variant"/>
</dbReference>
<dbReference type="ComplexPortal" id="CPX-4227">
    <property type="entry name" value="GBAF (SWI/SNF) ATP-dependent chromatin remodeling complex, ACTL6B-BICRA-SMARCA2 variant"/>
</dbReference>
<dbReference type="ComplexPortal" id="CPX-4228">
    <property type="entry name" value="GBAF (SWI/SNF) ATP-dependent chromatin remodeling complex, ACTL6B-BICRAL-SMARCA2 variant"/>
</dbReference>
<dbReference type="ComplexPortal" id="CPX-4229">
    <property type="entry name" value="GBAF (SWI/SNF) ATP-dependent chromatin remodeling complex, ACTL6B-BICRA-SMARCA4 variant"/>
</dbReference>
<dbReference type="ComplexPortal" id="CPX-4230">
    <property type="entry name" value="GBAF (SWI/SNF) ATP-dependent chromatin remodeling complex, ACTL6B-BICRAL-SMARCA4 variant"/>
</dbReference>
<dbReference type="CORUM" id="Q61466"/>
<dbReference type="DIP" id="DIP-33019N"/>
<dbReference type="FunCoup" id="Q61466">
    <property type="interactions" value="4247"/>
</dbReference>
<dbReference type="IntAct" id="Q61466">
    <property type="interactions" value="14"/>
</dbReference>
<dbReference type="MINT" id="Q61466"/>
<dbReference type="STRING" id="10090.ENSMUSP00000023759"/>
<dbReference type="GlyGen" id="Q61466">
    <property type="glycosylation" value="2 sites, 1 O-linked glycan (1 site)"/>
</dbReference>
<dbReference type="iPTMnet" id="Q61466"/>
<dbReference type="PhosphoSitePlus" id="Q61466"/>
<dbReference type="SwissPalm" id="Q61466"/>
<dbReference type="PaxDb" id="10090-ENSMUSP00000023759"/>
<dbReference type="PeptideAtlas" id="Q61466"/>
<dbReference type="ProteomicsDB" id="261528"/>
<dbReference type="Pumba" id="Q61466"/>
<dbReference type="Antibodypedia" id="1319">
    <property type="antibodies" value="274 antibodies from 32 providers"/>
</dbReference>
<dbReference type="DNASU" id="83797"/>
<dbReference type="Ensembl" id="ENSMUST00000023759.6">
    <property type="protein sequence ID" value="ENSMUSP00000023759.5"/>
    <property type="gene ID" value="ENSMUSG00000023018.6"/>
</dbReference>
<dbReference type="GeneID" id="83797"/>
<dbReference type="KEGG" id="mmu:83797"/>
<dbReference type="UCSC" id="uc007xqb.1">
    <property type="organism name" value="mouse"/>
</dbReference>
<dbReference type="AGR" id="MGI:1933623"/>
<dbReference type="CTD" id="6602"/>
<dbReference type="MGI" id="MGI:1933623">
    <property type="gene designation" value="Smarcd1"/>
</dbReference>
<dbReference type="VEuPathDB" id="HostDB:ENSMUSG00000023018"/>
<dbReference type="eggNOG" id="KOG2570">
    <property type="taxonomic scope" value="Eukaryota"/>
</dbReference>
<dbReference type="GeneTree" id="ENSGT00940000156629"/>
<dbReference type="HOGENOM" id="CLU_023529_0_1_1"/>
<dbReference type="InParanoid" id="Q61466"/>
<dbReference type="OMA" id="NFRCNEP"/>
<dbReference type="OrthoDB" id="10263741at2759"/>
<dbReference type="PhylomeDB" id="Q61466"/>
<dbReference type="TreeFam" id="TF106486"/>
<dbReference type="Reactome" id="R-MMU-3214858">
    <property type="pathway name" value="RMTs methylate histone arginines"/>
</dbReference>
<dbReference type="Reactome" id="R-MMU-8939243">
    <property type="pathway name" value="RUNX1 interacts with co-factors whose precise effect on RUNX1 targets is not known"/>
</dbReference>
<dbReference type="BioGRID-ORCS" id="83797">
    <property type="hits" value="14 hits in 87 CRISPR screens"/>
</dbReference>
<dbReference type="ChiTaRS" id="Smarcd1">
    <property type="organism name" value="mouse"/>
</dbReference>
<dbReference type="EvolutionaryTrace" id="Q61466"/>
<dbReference type="PRO" id="PR:Q61466"/>
<dbReference type="Proteomes" id="UP000000589">
    <property type="component" value="Chromosome 15"/>
</dbReference>
<dbReference type="RNAct" id="Q61466">
    <property type="molecule type" value="protein"/>
</dbReference>
<dbReference type="Bgee" id="ENSMUSG00000023018">
    <property type="expression patterns" value="Expressed in cortical plate and 226 other cell types or tissues"/>
</dbReference>
<dbReference type="ExpressionAtlas" id="Q61466">
    <property type="expression patterns" value="baseline and differential"/>
</dbReference>
<dbReference type="GO" id="GO:0035060">
    <property type="term" value="C:brahma complex"/>
    <property type="evidence" value="ECO:0000303"/>
    <property type="project" value="ComplexPortal"/>
</dbReference>
<dbReference type="GO" id="GO:0000785">
    <property type="term" value="C:chromatin"/>
    <property type="evidence" value="ECO:0000303"/>
    <property type="project" value="ComplexPortal"/>
</dbReference>
<dbReference type="GO" id="GO:0140288">
    <property type="term" value="C:GBAF complex"/>
    <property type="evidence" value="ECO:0000303"/>
    <property type="project" value="ComplexPortal"/>
</dbReference>
<dbReference type="GO" id="GO:0000776">
    <property type="term" value="C:kinetochore"/>
    <property type="evidence" value="ECO:0000303"/>
    <property type="project" value="ComplexPortal"/>
</dbReference>
<dbReference type="GO" id="GO:0071565">
    <property type="term" value="C:nBAF complex"/>
    <property type="evidence" value="ECO:0000314"/>
    <property type="project" value="UniProtKB"/>
</dbReference>
<dbReference type="GO" id="GO:0071564">
    <property type="term" value="C:npBAF complex"/>
    <property type="evidence" value="ECO:0000314"/>
    <property type="project" value="UniProtKB"/>
</dbReference>
<dbReference type="GO" id="GO:0016363">
    <property type="term" value="C:nuclear matrix"/>
    <property type="evidence" value="ECO:0000303"/>
    <property type="project" value="ComplexPortal"/>
</dbReference>
<dbReference type="GO" id="GO:0005654">
    <property type="term" value="C:nucleoplasm"/>
    <property type="evidence" value="ECO:0000304"/>
    <property type="project" value="Reactome"/>
</dbReference>
<dbReference type="GO" id="GO:0016586">
    <property type="term" value="C:RSC-type complex"/>
    <property type="evidence" value="ECO:0000303"/>
    <property type="project" value="ComplexPortal"/>
</dbReference>
<dbReference type="GO" id="GO:0016514">
    <property type="term" value="C:SWI/SNF complex"/>
    <property type="evidence" value="ECO:0000314"/>
    <property type="project" value="UniProtKB"/>
</dbReference>
<dbReference type="GO" id="GO:0003682">
    <property type="term" value="F:chromatin binding"/>
    <property type="evidence" value="ECO:0007669"/>
    <property type="project" value="Ensembl"/>
</dbReference>
<dbReference type="GO" id="GO:0060090">
    <property type="term" value="F:molecular adaptor activity"/>
    <property type="evidence" value="ECO:0007669"/>
    <property type="project" value="Ensembl"/>
</dbReference>
<dbReference type="GO" id="GO:0005102">
    <property type="term" value="F:signaling receptor binding"/>
    <property type="evidence" value="ECO:0007669"/>
    <property type="project" value="Ensembl"/>
</dbReference>
<dbReference type="GO" id="GO:0071398">
    <property type="term" value="P:cellular response to fatty acid"/>
    <property type="evidence" value="ECO:0007669"/>
    <property type="project" value="Ensembl"/>
</dbReference>
<dbReference type="GO" id="GO:0006338">
    <property type="term" value="P:chromatin remodeling"/>
    <property type="evidence" value="ECO:0000303"/>
    <property type="project" value="ComplexPortal"/>
</dbReference>
<dbReference type="GO" id="GO:0045596">
    <property type="term" value="P:negative regulation of cell differentiation"/>
    <property type="evidence" value="ECO:0000303"/>
    <property type="project" value="ComplexPortal"/>
</dbReference>
<dbReference type="GO" id="GO:0007399">
    <property type="term" value="P:nervous system development"/>
    <property type="evidence" value="ECO:0007669"/>
    <property type="project" value="UniProtKB-KW"/>
</dbReference>
<dbReference type="GO" id="GO:0006337">
    <property type="term" value="P:nucleosome disassembly"/>
    <property type="evidence" value="ECO:0007669"/>
    <property type="project" value="Ensembl"/>
</dbReference>
<dbReference type="GO" id="GO:0045597">
    <property type="term" value="P:positive regulation of cell differentiation"/>
    <property type="evidence" value="ECO:0000303"/>
    <property type="project" value="ComplexPortal"/>
</dbReference>
<dbReference type="GO" id="GO:0008284">
    <property type="term" value="P:positive regulation of cell population proliferation"/>
    <property type="evidence" value="ECO:0000303"/>
    <property type="project" value="ComplexPortal"/>
</dbReference>
<dbReference type="GO" id="GO:2000781">
    <property type="term" value="P:positive regulation of double-strand break repair"/>
    <property type="evidence" value="ECO:0000303"/>
    <property type="project" value="ComplexPortal"/>
</dbReference>
<dbReference type="GO" id="GO:0045663">
    <property type="term" value="P:positive regulation of myoblast differentiation"/>
    <property type="evidence" value="ECO:0000303"/>
    <property type="project" value="ComplexPortal"/>
</dbReference>
<dbReference type="GO" id="GO:1902459">
    <property type="term" value="P:positive regulation of stem cell population maintenance"/>
    <property type="evidence" value="ECO:0000303"/>
    <property type="project" value="ComplexPortal"/>
</dbReference>
<dbReference type="GO" id="GO:0045582">
    <property type="term" value="P:positive regulation of T cell differentiation"/>
    <property type="evidence" value="ECO:0000303"/>
    <property type="project" value="ComplexPortal"/>
</dbReference>
<dbReference type="GO" id="GO:0070316">
    <property type="term" value="P:regulation of G0 to G1 transition"/>
    <property type="evidence" value="ECO:0000303"/>
    <property type="project" value="ComplexPortal"/>
</dbReference>
<dbReference type="GO" id="GO:2000045">
    <property type="term" value="P:regulation of G1/S transition of mitotic cell cycle"/>
    <property type="evidence" value="ECO:0000303"/>
    <property type="project" value="ComplexPortal"/>
</dbReference>
<dbReference type="GO" id="GO:0030071">
    <property type="term" value="P:regulation of mitotic metaphase/anaphase transition"/>
    <property type="evidence" value="ECO:0000303"/>
    <property type="project" value="ComplexPortal"/>
</dbReference>
<dbReference type="GO" id="GO:2000819">
    <property type="term" value="P:regulation of nucleotide-excision repair"/>
    <property type="evidence" value="ECO:0000303"/>
    <property type="project" value="ComplexPortal"/>
</dbReference>
<dbReference type="GO" id="GO:0006357">
    <property type="term" value="P:regulation of transcription by RNA polymerase II"/>
    <property type="evidence" value="ECO:0000303"/>
    <property type="project" value="ComplexPortal"/>
</dbReference>
<dbReference type="GO" id="GO:0045815">
    <property type="term" value="P:transcription initiation-coupled chromatin remodeling"/>
    <property type="evidence" value="ECO:0007669"/>
    <property type="project" value="Ensembl"/>
</dbReference>
<dbReference type="CDD" id="cd17674">
    <property type="entry name" value="SWIB_BAF60A"/>
    <property type="match status" value="1"/>
</dbReference>
<dbReference type="FunFam" id="1.10.245.10:FF:000001">
    <property type="entry name" value="SWI/SNF-related matrix-associated regulator of chromatin subfamily D member 3 isoform 1"/>
    <property type="match status" value="1"/>
</dbReference>
<dbReference type="Gene3D" id="1.10.245.10">
    <property type="entry name" value="SWIB/MDM2 domain"/>
    <property type="match status" value="1"/>
</dbReference>
<dbReference type="InterPro" id="IPR038041">
    <property type="entry name" value="SMARCD1_SWIB_dom"/>
</dbReference>
<dbReference type="InterPro" id="IPR019835">
    <property type="entry name" value="SWIB_domain"/>
</dbReference>
<dbReference type="InterPro" id="IPR036885">
    <property type="entry name" value="SWIB_MDM2_dom_sf"/>
</dbReference>
<dbReference type="InterPro" id="IPR003121">
    <property type="entry name" value="SWIB_MDM2_domain"/>
</dbReference>
<dbReference type="PANTHER" id="PTHR13844">
    <property type="entry name" value="SWI/SNF-RELATED MATRIX-ASSOCIATED ACTIN-DEPENDENT REGULATOR OF CHROMATIN SUBFAMILY D"/>
    <property type="match status" value="1"/>
</dbReference>
<dbReference type="Pfam" id="PF02201">
    <property type="entry name" value="SWIB"/>
    <property type="match status" value="1"/>
</dbReference>
<dbReference type="SMART" id="SM00151">
    <property type="entry name" value="SWIB"/>
    <property type="match status" value="1"/>
</dbReference>
<dbReference type="SUPFAM" id="SSF47592">
    <property type="entry name" value="SWIB/MDM2 domain"/>
    <property type="match status" value="1"/>
</dbReference>
<dbReference type="PROSITE" id="PS51925">
    <property type="entry name" value="SWIB_MDM2"/>
    <property type="match status" value="1"/>
</dbReference>
<sequence length="515" mass="58245">MAARAGFQSVAPSGGAGASGGAGVAAALGPGGTPGPPVRMGPAPGQGLYRSPMPGAAYPRPGMLPGSRMTPQGPSMGPPGYGGNPSVRPGLAQSGMDQSRKRPAPQQIQQVQQQAVQNRNHNAKKKKMADKILPQRIRELVPESQAYMDLLAFERKLDQTIMRKRLDIQEALKRPIKQKRKLRIFISNTFNPAKSDAEDGEGTVASWELRVEGRLLEDAALSKYDATKQKRKFSSFFKSLVIELDKDLYGPDNHLVEWHRTATTQETDGFQVKRPGDVNVRCTVLLMLDYQPPQFKLDPRLARLLGIHTQTRPVIIQALWQYIKTHKLQDPHEREFVLCDKYLQQIFESQRMKFSEIPQRLHALLMPPEPIIINHVISVDPNDQKKTACYDIDVEVDDTLKTQMNSFLLSTASQQEIATLDNKIHETIETINQLKTQREFMLSFARDPQGFINDWLQSQCRDLKTMTDVVGNPEEERRAEFYFQPWAQEAVCRYFYSKVQQRRQELEQALGIRNT</sequence>
<feature type="chain" id="PRO_0000071984" description="SWI/SNF-related matrix-associated actin-dependent regulator of chromatin subfamily D member 1">
    <location>
        <begin position="1"/>
        <end position="515"/>
    </location>
</feature>
<feature type="domain" description="SWIB/MDM2" evidence="5">
    <location>
        <begin position="290"/>
        <end position="367"/>
    </location>
</feature>
<feature type="region of interest" description="Disordered" evidence="6">
    <location>
        <begin position="1"/>
        <end position="128"/>
    </location>
</feature>
<feature type="region of interest" description="Interaction with ESR1, NR1H4, NR3C1, PGR and SMARCA4" evidence="1">
    <location>
        <begin position="43"/>
        <end position="167"/>
    </location>
</feature>
<feature type="region of interest" description="Interaction with SMARCC1 and SMARCC2" evidence="1">
    <location>
        <begin position="168"/>
        <end position="474"/>
    </location>
</feature>
<feature type="region of interest" description="Necessary for GR/NR3C1-mediated remodeling and transcription from chromatin; required for GR/NR3C1 interaction with the BRG1/SMARCA4 complex in vivo" evidence="1">
    <location>
        <begin position="180"/>
        <end position="515"/>
    </location>
</feature>
<feature type="coiled-coil region" evidence="4">
    <location>
        <begin position="412"/>
        <end position="440"/>
    </location>
</feature>
<feature type="compositionally biased region" description="Gly residues" evidence="6">
    <location>
        <begin position="14"/>
        <end position="23"/>
    </location>
</feature>
<feature type="compositionally biased region" description="Low complexity" evidence="6">
    <location>
        <begin position="104"/>
        <end position="117"/>
    </location>
</feature>
<feature type="modified residue" description="Asymmetric dimethylarginine" evidence="2">
    <location>
        <position position="68"/>
    </location>
</feature>
<feature type="modified residue" description="Asymmetric dimethylarginine" evidence="16">
    <location>
        <position position="88"/>
    </location>
</feature>
<feature type="modified residue" description="Phosphothreonine" evidence="2">
    <location>
        <position position="203"/>
    </location>
</feature>
<feature type="modified residue" description="N6-acetyllysine" evidence="15">
    <location>
        <position position="223"/>
    </location>
</feature>
<feature type="cross-link" description="Glycyl lysine isopeptide (Lys-Gly) (interchain with G-Cter in SUMO2)" evidence="3">
    <location>
        <position position="101"/>
    </location>
</feature>
<feature type="sequence conflict" description="In Ref. 2; AAA53377 and 3; AAC52794." evidence="14" ref="2 3">
    <original>G</original>
    <variation>A</variation>
    <location>
        <position position="15"/>
    </location>
</feature>
<feature type="sequence conflict" description="In Ref. 4; BAC35856." evidence="14" ref="4">
    <original>L</original>
    <variation>I</variation>
    <location>
        <position position="215"/>
    </location>
</feature>
<feature type="sequence conflict" description="In Ref. 4; BAC35856." evidence="14" ref="4">
    <original>D</original>
    <variation>E</variation>
    <location>
        <position position="218"/>
    </location>
</feature>
<feature type="sequence conflict" description="In Ref. 2; AAA53377 and 3; AAC52794." evidence="14" ref="2 3">
    <original>Q</original>
    <variation>S</variation>
    <location>
        <position position="449"/>
    </location>
</feature>
<feature type="sequence conflict" description="In Ref. 2; AAA53377 and 3; AAC52794." evidence="14" ref="2 3">
    <original>D</original>
    <variation>G</variation>
    <location>
        <position position="462"/>
    </location>
</feature>
<feature type="strand" evidence="17">
    <location>
        <begin position="294"/>
        <end position="297"/>
    </location>
</feature>
<feature type="helix" evidence="17">
    <location>
        <begin position="301"/>
        <end position="304"/>
    </location>
</feature>
<feature type="strand" evidence="17">
    <location>
        <begin position="308"/>
        <end position="311"/>
    </location>
</feature>
<feature type="helix" evidence="17">
    <location>
        <begin position="312"/>
        <end position="325"/>
    </location>
</feature>
<feature type="strand" evidence="17">
    <location>
        <begin position="334"/>
        <end position="337"/>
    </location>
</feature>
<feature type="helix" evidence="17">
    <location>
        <begin position="343"/>
        <end position="346"/>
    </location>
</feature>
<feature type="strand" evidence="17">
    <location>
        <begin position="350"/>
        <end position="353"/>
    </location>
</feature>
<feature type="helix" evidence="17">
    <location>
        <begin position="354"/>
        <end position="356"/>
    </location>
</feature>
<feature type="helix" evidence="17">
    <location>
        <begin position="358"/>
        <end position="364"/>
    </location>
</feature>
<evidence type="ECO:0000250" key="1"/>
<evidence type="ECO:0000250" key="2">
    <source>
        <dbReference type="UniProtKB" id="Q92925"/>
    </source>
</evidence>
<evidence type="ECO:0000250" key="3">
    <source>
        <dbReference type="UniProtKB" id="Q96GM5"/>
    </source>
</evidence>
<evidence type="ECO:0000255" key="4"/>
<evidence type="ECO:0000255" key="5">
    <source>
        <dbReference type="PROSITE-ProRule" id="PRU01273"/>
    </source>
</evidence>
<evidence type="ECO:0000256" key="6">
    <source>
        <dbReference type="SAM" id="MobiDB-lite"/>
    </source>
</evidence>
<evidence type="ECO:0000269" key="7">
    <source>
    </source>
</evidence>
<evidence type="ECO:0000269" key="8">
    <source>
    </source>
</evidence>
<evidence type="ECO:0000269" key="9">
    <source>
    </source>
</evidence>
<evidence type="ECO:0000269" key="10">
    <source>
    </source>
</evidence>
<evidence type="ECO:0000269" key="11">
    <source>
    </source>
</evidence>
<evidence type="ECO:0000269" key="12">
    <source>
    </source>
</evidence>
<evidence type="ECO:0000269" key="13">
    <source>
    </source>
</evidence>
<evidence type="ECO:0000305" key="14"/>
<evidence type="ECO:0007744" key="15">
    <source>
    </source>
</evidence>
<evidence type="ECO:0007744" key="16">
    <source>
    </source>
</evidence>
<evidence type="ECO:0007829" key="17">
    <source>
        <dbReference type="PDB" id="1UHR"/>
    </source>
</evidence>
<organism>
    <name type="scientific">Mus musculus</name>
    <name type="common">Mouse</name>
    <dbReference type="NCBI Taxonomy" id="10090"/>
    <lineage>
        <taxon>Eukaryota</taxon>
        <taxon>Metazoa</taxon>
        <taxon>Chordata</taxon>
        <taxon>Craniata</taxon>
        <taxon>Vertebrata</taxon>
        <taxon>Euteleostomi</taxon>
        <taxon>Mammalia</taxon>
        <taxon>Eutheria</taxon>
        <taxon>Euarchontoglires</taxon>
        <taxon>Glires</taxon>
        <taxon>Rodentia</taxon>
        <taxon>Myomorpha</taxon>
        <taxon>Muroidea</taxon>
        <taxon>Muridae</taxon>
        <taxon>Murinae</taxon>
        <taxon>Mus</taxon>
        <taxon>Mus</taxon>
    </lineage>
</organism>
<reference key="1">
    <citation type="journal article" date="2004" name="Genome Res.">
        <title>The status, quality, and expansion of the NIH full-length cDNA project: the Mammalian Gene Collection (MGC).</title>
        <authorList>
            <consortium name="The MGC Project Team"/>
        </authorList>
    </citation>
    <scope>NUCLEOTIDE SEQUENCE [LARGE SCALE MRNA]</scope>
    <source>
        <strain>C57BL/6J</strain>
        <tissue>Retina</tissue>
    </source>
</reference>
<reference key="2">
    <citation type="journal article" date="1989" name="Mol. Cell. Biol.">
        <title>An ubiquitously expressed gene 3.5 kilobases upstream of the glycerol-3-phosphate dehydrogenase gene in mice.</title>
        <authorList>
            <person name="Johnston L.A."/>
            <person name="Kotarski M.A."/>
            <person name="Jerry D.J."/>
            <person name="Kozak L.P."/>
        </authorList>
    </citation>
    <scope>NUCLEOTIDE SEQUENCE [MRNA] OF 4-515</scope>
    <scope>TISSUE SPECIFICITY</scope>
    <source>
        <strain>BALB/cJ</strain>
        <tissue>Carcinoma</tissue>
    </source>
</reference>
<reference key="3">
    <citation type="journal article" date="1996" name="Genes Dev.">
        <title>Diversity and specialization of mammalian SWI/SNF complexes.</title>
        <authorList>
            <person name="Wang W."/>
            <person name="Xue Y."/>
            <person name="Zhou S."/>
            <person name="Kuo A."/>
            <person name="Cairns B.R."/>
            <person name="Crabtree G.R."/>
        </authorList>
    </citation>
    <scope>NUCLEOTIDE SEQUENCE [MRNA] OF 4-515</scope>
    <scope>SUBUNIT</scope>
    <scope>TISSUE SPECIFICITY</scope>
</reference>
<reference key="4">
    <citation type="journal article" date="2005" name="Science">
        <title>The transcriptional landscape of the mammalian genome.</title>
        <authorList>
            <person name="Carninci P."/>
            <person name="Kasukawa T."/>
            <person name="Katayama S."/>
            <person name="Gough J."/>
            <person name="Frith M.C."/>
            <person name="Maeda N."/>
            <person name="Oyama R."/>
            <person name="Ravasi T."/>
            <person name="Lenhard B."/>
            <person name="Wells C."/>
            <person name="Kodzius R."/>
            <person name="Shimokawa K."/>
            <person name="Bajic V.B."/>
            <person name="Brenner S.E."/>
            <person name="Batalov S."/>
            <person name="Forrest A.R."/>
            <person name="Zavolan M."/>
            <person name="Davis M.J."/>
            <person name="Wilming L.G."/>
            <person name="Aidinis V."/>
            <person name="Allen J.E."/>
            <person name="Ambesi-Impiombato A."/>
            <person name="Apweiler R."/>
            <person name="Aturaliya R.N."/>
            <person name="Bailey T.L."/>
            <person name="Bansal M."/>
            <person name="Baxter L."/>
            <person name="Beisel K.W."/>
            <person name="Bersano T."/>
            <person name="Bono H."/>
            <person name="Chalk A.M."/>
            <person name="Chiu K.P."/>
            <person name="Choudhary V."/>
            <person name="Christoffels A."/>
            <person name="Clutterbuck D.R."/>
            <person name="Crowe M.L."/>
            <person name="Dalla E."/>
            <person name="Dalrymple B.P."/>
            <person name="de Bono B."/>
            <person name="Della Gatta G."/>
            <person name="di Bernardo D."/>
            <person name="Down T."/>
            <person name="Engstrom P."/>
            <person name="Fagiolini M."/>
            <person name="Faulkner G."/>
            <person name="Fletcher C.F."/>
            <person name="Fukushima T."/>
            <person name="Furuno M."/>
            <person name="Futaki S."/>
            <person name="Gariboldi M."/>
            <person name="Georgii-Hemming P."/>
            <person name="Gingeras T.R."/>
            <person name="Gojobori T."/>
            <person name="Green R.E."/>
            <person name="Gustincich S."/>
            <person name="Harbers M."/>
            <person name="Hayashi Y."/>
            <person name="Hensch T.K."/>
            <person name="Hirokawa N."/>
            <person name="Hill D."/>
            <person name="Huminiecki L."/>
            <person name="Iacono M."/>
            <person name="Ikeo K."/>
            <person name="Iwama A."/>
            <person name="Ishikawa T."/>
            <person name="Jakt M."/>
            <person name="Kanapin A."/>
            <person name="Katoh M."/>
            <person name="Kawasawa Y."/>
            <person name="Kelso J."/>
            <person name="Kitamura H."/>
            <person name="Kitano H."/>
            <person name="Kollias G."/>
            <person name="Krishnan S.P."/>
            <person name="Kruger A."/>
            <person name="Kummerfeld S.K."/>
            <person name="Kurochkin I.V."/>
            <person name="Lareau L.F."/>
            <person name="Lazarevic D."/>
            <person name="Lipovich L."/>
            <person name="Liu J."/>
            <person name="Liuni S."/>
            <person name="McWilliam S."/>
            <person name="Madan Babu M."/>
            <person name="Madera M."/>
            <person name="Marchionni L."/>
            <person name="Matsuda H."/>
            <person name="Matsuzawa S."/>
            <person name="Miki H."/>
            <person name="Mignone F."/>
            <person name="Miyake S."/>
            <person name="Morris K."/>
            <person name="Mottagui-Tabar S."/>
            <person name="Mulder N."/>
            <person name="Nakano N."/>
            <person name="Nakauchi H."/>
            <person name="Ng P."/>
            <person name="Nilsson R."/>
            <person name="Nishiguchi S."/>
            <person name="Nishikawa S."/>
            <person name="Nori F."/>
            <person name="Ohara O."/>
            <person name="Okazaki Y."/>
            <person name="Orlando V."/>
            <person name="Pang K.C."/>
            <person name="Pavan W.J."/>
            <person name="Pavesi G."/>
            <person name="Pesole G."/>
            <person name="Petrovsky N."/>
            <person name="Piazza S."/>
            <person name="Reed J."/>
            <person name="Reid J.F."/>
            <person name="Ring B.Z."/>
            <person name="Ringwald M."/>
            <person name="Rost B."/>
            <person name="Ruan Y."/>
            <person name="Salzberg S.L."/>
            <person name="Sandelin A."/>
            <person name="Schneider C."/>
            <person name="Schoenbach C."/>
            <person name="Sekiguchi K."/>
            <person name="Semple C.A."/>
            <person name="Seno S."/>
            <person name="Sessa L."/>
            <person name="Sheng Y."/>
            <person name="Shibata Y."/>
            <person name="Shimada H."/>
            <person name="Shimada K."/>
            <person name="Silva D."/>
            <person name="Sinclair B."/>
            <person name="Sperling S."/>
            <person name="Stupka E."/>
            <person name="Sugiura K."/>
            <person name="Sultana R."/>
            <person name="Takenaka Y."/>
            <person name="Taki K."/>
            <person name="Tammoja K."/>
            <person name="Tan S.L."/>
            <person name="Tang S."/>
            <person name="Taylor M.S."/>
            <person name="Tegner J."/>
            <person name="Teichmann S.A."/>
            <person name="Ueda H.R."/>
            <person name="van Nimwegen E."/>
            <person name="Verardo R."/>
            <person name="Wei C.L."/>
            <person name="Yagi K."/>
            <person name="Yamanishi H."/>
            <person name="Zabarovsky E."/>
            <person name="Zhu S."/>
            <person name="Zimmer A."/>
            <person name="Hide W."/>
            <person name="Bult C."/>
            <person name="Grimmond S.M."/>
            <person name="Teasdale R.D."/>
            <person name="Liu E.T."/>
            <person name="Brusic V."/>
            <person name="Quackenbush J."/>
            <person name="Wahlestedt C."/>
            <person name="Mattick J.S."/>
            <person name="Hume D.A."/>
            <person name="Kai C."/>
            <person name="Sasaki D."/>
            <person name="Tomaru Y."/>
            <person name="Fukuda S."/>
            <person name="Kanamori-Katayama M."/>
            <person name="Suzuki M."/>
            <person name="Aoki J."/>
            <person name="Arakawa T."/>
            <person name="Iida J."/>
            <person name="Imamura K."/>
            <person name="Itoh M."/>
            <person name="Kato T."/>
            <person name="Kawaji H."/>
            <person name="Kawagashira N."/>
            <person name="Kawashima T."/>
            <person name="Kojima M."/>
            <person name="Kondo S."/>
            <person name="Konno H."/>
            <person name="Nakano K."/>
            <person name="Ninomiya N."/>
            <person name="Nishio T."/>
            <person name="Okada M."/>
            <person name="Plessy C."/>
            <person name="Shibata K."/>
            <person name="Shiraki T."/>
            <person name="Suzuki S."/>
            <person name="Tagami M."/>
            <person name="Waki K."/>
            <person name="Watahiki A."/>
            <person name="Okamura-Oho Y."/>
            <person name="Suzuki H."/>
            <person name="Kawai J."/>
            <person name="Hayashizaki Y."/>
        </authorList>
    </citation>
    <scope>NUCLEOTIDE SEQUENCE [LARGE SCALE MRNA] OF 211-515</scope>
    <source>
        <strain>C57BL/6J</strain>
        <tissue>Brain</tissue>
    </source>
</reference>
<reference key="5">
    <citation type="submission" date="2007-04" db="UniProtKB">
        <authorList>
            <person name="Lubec G."/>
            <person name="Kang S.U."/>
        </authorList>
    </citation>
    <scope>PROTEIN SEQUENCE OF 166-173</scope>
    <scope>IDENTIFICATION BY MASS SPECTROMETRY</scope>
    <source>
        <strain>C57BL/6J</strain>
        <tissue>Brain</tissue>
    </source>
</reference>
<reference key="6">
    <citation type="journal article" date="1996" name="EMBO J.">
        <title>Purification and biochemical heterogeneity of the mammalian SWI-SNF complex.</title>
        <authorList>
            <person name="Wang W."/>
            <person name="Cote J."/>
            <person name="Xue Y."/>
            <person name="Zhou S."/>
            <person name="Khavari P.A."/>
            <person name="Biggar S.R."/>
            <person name="Muchardt C."/>
            <person name="Kalpana G.V."/>
            <person name="Goff S.P."/>
            <person name="Yaniv M."/>
            <person name="Workman J.L."/>
            <person name="Crabtree G.R."/>
        </authorList>
    </citation>
    <scope>SUBUNIT</scope>
</reference>
<reference key="7">
    <citation type="journal article" date="2007" name="Neuron">
        <title>An essential switch in subunit composition of a chromatin remodeling complex during neural development.</title>
        <authorList>
            <person name="Lessard J."/>
            <person name="Wu J.I."/>
            <person name="Ranish J.A."/>
            <person name="Wan M."/>
            <person name="Winslow M.M."/>
            <person name="Staahl B.T."/>
            <person name="Wu H."/>
            <person name="Aebersold R."/>
            <person name="Graef I.A."/>
            <person name="Crabtree G.R."/>
        </authorList>
    </citation>
    <scope>FUNCTION OF THE NBAF AND NPBAF COMPLEXES</scope>
    <scope>IDENTIFICATION BY MASS SPECTROMETRY</scope>
    <scope>IDENTIFICATION IN THE NBAF AND NPBAF COMPLEXES</scope>
    <scope>DEVELOPMENTAL STAGE</scope>
</reference>
<reference key="8">
    <citation type="journal article" date="2010" name="Cell">
        <title>A tissue-specific atlas of mouse protein phosphorylation and expression.</title>
        <authorList>
            <person name="Huttlin E.L."/>
            <person name="Jedrychowski M.P."/>
            <person name="Elias J.E."/>
            <person name="Goswami T."/>
            <person name="Rad R."/>
            <person name="Beausoleil S.A."/>
            <person name="Villen J."/>
            <person name="Haas W."/>
            <person name="Sowa M.E."/>
            <person name="Gygi S.P."/>
        </authorList>
    </citation>
    <scope>IDENTIFICATION BY MASS SPECTROMETRY [LARGE SCALE ANALYSIS]</scope>
    <source>
        <tissue>Brain</tissue>
        <tissue>Testis</tissue>
    </source>
</reference>
<reference key="9">
    <citation type="journal article" date="2013" name="Mol. Cell">
        <title>SIRT5-mediated lysine desuccinylation impacts diverse metabolic pathways.</title>
        <authorList>
            <person name="Park J."/>
            <person name="Chen Y."/>
            <person name="Tishkoff D.X."/>
            <person name="Peng C."/>
            <person name="Tan M."/>
            <person name="Dai L."/>
            <person name="Xie Z."/>
            <person name="Zhang Y."/>
            <person name="Zwaans B.M."/>
            <person name="Skinner M.E."/>
            <person name="Lombard D.B."/>
            <person name="Zhao Y."/>
        </authorList>
    </citation>
    <scope>ACETYLATION [LARGE SCALE ANALYSIS] AT LYS-223</scope>
    <scope>IDENTIFICATION BY MASS SPECTROMETRY [LARGE SCALE ANALYSIS]</scope>
    <source>
        <tissue>Embryonic fibroblast</tissue>
    </source>
</reference>
<reference key="10">
    <citation type="journal article" date="2014" name="EMBO J.">
        <title>Akirin2 is critical for inducing inflammatory genes by bridging IkappaB-zeta and the SWI/SNF complex.</title>
        <authorList>
            <person name="Tartey S."/>
            <person name="Matsushita K."/>
            <person name="Vandenbon A."/>
            <person name="Ori D."/>
            <person name="Imamura T."/>
            <person name="Mino T."/>
            <person name="Standley D.M."/>
            <person name="Hoffmann J.A."/>
            <person name="Reichhart J.M."/>
            <person name="Akira S."/>
            <person name="Takeuchi O."/>
        </authorList>
    </citation>
    <scope>INTERACTION WITH AKIRIN2</scope>
</reference>
<reference key="11">
    <citation type="journal article" date="2014" name="Mol. Cell. Proteomics">
        <title>Immunoaffinity enrichment and mass spectrometry analysis of protein methylation.</title>
        <authorList>
            <person name="Guo A."/>
            <person name="Gu H."/>
            <person name="Zhou J."/>
            <person name="Mulhern D."/>
            <person name="Wang Y."/>
            <person name="Lee K.A."/>
            <person name="Yang V."/>
            <person name="Aguiar M."/>
            <person name="Kornhauser J."/>
            <person name="Jia X."/>
            <person name="Ren J."/>
            <person name="Beausoleil S.A."/>
            <person name="Silva J.C."/>
            <person name="Vemulapalli V."/>
            <person name="Bedford M.T."/>
            <person name="Comb M.J."/>
        </authorList>
    </citation>
    <scope>METHYLATION [LARGE SCALE ANALYSIS] AT ARG-88</scope>
    <scope>IDENTIFICATION BY MASS SPECTROMETRY [LARGE SCALE ANALYSIS]</scope>
    <source>
        <tissue>Brain</tissue>
        <tissue>Embryo</tissue>
    </source>
</reference>
<reference key="12">
    <citation type="journal article" date="2017" name="Mol. Cell">
        <title>AP-1 Transcription Factors and the BAF Complex Mediate Signal-Dependent Enhancer Selection.</title>
        <authorList>
            <person name="Vierbuchen T."/>
            <person name="Ling E."/>
            <person name="Cowley C.J."/>
            <person name="Couch C.H."/>
            <person name="Wang X."/>
            <person name="Harmin D.A."/>
            <person name="Roberts C.W.M."/>
            <person name="Greenberg M.E."/>
        </authorList>
    </citation>
    <scope>INTERACTION WITH FOS; FOSB; FOSL1 AND FOSL2</scope>
</reference>
<reference key="13">
    <citation type="journal article" date="2018" name="J. Biol. Chem.">
        <title>Glioma tumor suppressor candidate region gene 1 (GLTSCR1) and its paralog GLTSCR1-like form SWI/SNF chromatin remodeling subcomplexes.</title>
        <authorList>
            <person name="Alpsoy A."/>
            <person name="Dykhuizen E.C."/>
        </authorList>
    </citation>
    <scope>FUNCTION</scope>
    <scope>IDENTIFICATION IN THE GBAF COMPLEX</scope>
</reference>
<reference key="14">
    <citation type="submission" date="2004-08" db="PDB data bank">
        <title>Solution structure of the SWIB domain of mouse BRG1-associated factor 60A.</title>
        <authorList>
            <consortium name="RIKEN structural genomics initiative (RSGI)"/>
        </authorList>
    </citation>
    <scope>STRUCTURE BY NMR OF 291-370</scope>
</reference>
<keyword id="KW-0002">3D-structure</keyword>
<keyword id="KW-0007">Acetylation</keyword>
<keyword id="KW-0156">Chromatin regulator</keyword>
<keyword id="KW-0175">Coiled coil</keyword>
<keyword id="KW-0903">Direct protein sequencing</keyword>
<keyword id="KW-1017">Isopeptide bond</keyword>
<keyword id="KW-0488">Methylation</keyword>
<keyword id="KW-0524">Neurogenesis</keyword>
<keyword id="KW-0539">Nucleus</keyword>
<keyword id="KW-0597">Phosphoprotein</keyword>
<keyword id="KW-1185">Reference proteome</keyword>
<keyword id="KW-0832">Ubl conjugation</keyword>
<accession>Q61466</accession>
<accession>P70384</accession>
<accession>Q8R0I7</accession>
<proteinExistence type="evidence at protein level"/>
<name>SMRD1_MOUSE</name>